<feature type="chain" id="PRO_1000196569" description="Ribosome maturation factor RimM">
    <location>
        <begin position="1"/>
        <end position="176"/>
    </location>
</feature>
<feature type="domain" description="PRC barrel" evidence="1">
    <location>
        <begin position="96"/>
        <end position="176"/>
    </location>
</feature>
<organism>
    <name type="scientific">Shewanella baltica (strain OS223)</name>
    <dbReference type="NCBI Taxonomy" id="407976"/>
    <lineage>
        <taxon>Bacteria</taxon>
        <taxon>Pseudomonadati</taxon>
        <taxon>Pseudomonadota</taxon>
        <taxon>Gammaproteobacteria</taxon>
        <taxon>Alteromonadales</taxon>
        <taxon>Shewanellaceae</taxon>
        <taxon>Shewanella</taxon>
    </lineage>
</organism>
<accession>B8EBP2</accession>
<sequence>MSSNQQPVVLGKLGSCHGIKGWLKITAYTDSVEGIFDYSPWLIKENGEWREIKVTQWRYQGKAVVALLDGVETREQAQMLTNCEIAILPEQMNDLPADEFYWRDLIGCEVVNTTGYNMGIVDQIVETGSNDVLLVKANAKDSFGKVERMIPFVPEQFIKTVDLQGKQILVDWDPDF</sequence>
<protein>
    <recommendedName>
        <fullName evidence="1">Ribosome maturation factor RimM</fullName>
    </recommendedName>
</protein>
<keyword id="KW-0143">Chaperone</keyword>
<keyword id="KW-0963">Cytoplasm</keyword>
<keyword id="KW-0690">Ribosome biogenesis</keyword>
<keyword id="KW-0698">rRNA processing</keyword>
<comment type="function">
    <text evidence="1">An accessory protein needed during the final step in the assembly of 30S ribosomal subunit, possibly for assembly of the head region. Essential for efficient processing of 16S rRNA. May be needed both before and after RbfA during the maturation of 16S rRNA. It has affinity for free ribosomal 30S subunits but not for 70S ribosomes.</text>
</comment>
<comment type="subunit">
    <text evidence="1">Binds ribosomal protein uS19.</text>
</comment>
<comment type="subcellular location">
    <subcellularLocation>
        <location evidence="1">Cytoplasm</location>
    </subcellularLocation>
</comment>
<comment type="domain">
    <text evidence="1">The PRC barrel domain binds ribosomal protein uS19.</text>
</comment>
<comment type="similarity">
    <text evidence="1">Belongs to the RimM family.</text>
</comment>
<proteinExistence type="inferred from homology"/>
<name>RIMM_SHEB2</name>
<dbReference type="EMBL" id="CP001252">
    <property type="protein sequence ID" value="ACK47587.1"/>
    <property type="molecule type" value="Genomic_DNA"/>
</dbReference>
<dbReference type="RefSeq" id="WP_006080789.1">
    <property type="nucleotide sequence ID" value="NC_011663.1"/>
</dbReference>
<dbReference type="SMR" id="B8EBP2"/>
<dbReference type="GeneID" id="11771556"/>
<dbReference type="KEGG" id="sbp:Sbal223_3102"/>
<dbReference type="HOGENOM" id="CLU_077636_1_0_6"/>
<dbReference type="Proteomes" id="UP000002507">
    <property type="component" value="Chromosome"/>
</dbReference>
<dbReference type="GO" id="GO:0005737">
    <property type="term" value="C:cytoplasm"/>
    <property type="evidence" value="ECO:0007669"/>
    <property type="project" value="UniProtKB-SubCell"/>
</dbReference>
<dbReference type="GO" id="GO:0005840">
    <property type="term" value="C:ribosome"/>
    <property type="evidence" value="ECO:0007669"/>
    <property type="project" value="InterPro"/>
</dbReference>
<dbReference type="GO" id="GO:0043022">
    <property type="term" value="F:ribosome binding"/>
    <property type="evidence" value="ECO:0007669"/>
    <property type="project" value="InterPro"/>
</dbReference>
<dbReference type="GO" id="GO:0042274">
    <property type="term" value="P:ribosomal small subunit biogenesis"/>
    <property type="evidence" value="ECO:0007669"/>
    <property type="project" value="UniProtKB-UniRule"/>
</dbReference>
<dbReference type="GO" id="GO:0006364">
    <property type="term" value="P:rRNA processing"/>
    <property type="evidence" value="ECO:0007669"/>
    <property type="project" value="UniProtKB-UniRule"/>
</dbReference>
<dbReference type="Gene3D" id="2.30.30.240">
    <property type="entry name" value="PRC-barrel domain"/>
    <property type="match status" value="1"/>
</dbReference>
<dbReference type="Gene3D" id="2.40.30.60">
    <property type="entry name" value="RimM"/>
    <property type="match status" value="1"/>
</dbReference>
<dbReference type="HAMAP" id="MF_00014">
    <property type="entry name" value="Ribosome_mat_RimM"/>
    <property type="match status" value="1"/>
</dbReference>
<dbReference type="InterPro" id="IPR011033">
    <property type="entry name" value="PRC_barrel-like_sf"/>
</dbReference>
<dbReference type="InterPro" id="IPR056792">
    <property type="entry name" value="PRC_RimM"/>
</dbReference>
<dbReference type="InterPro" id="IPR011961">
    <property type="entry name" value="RimM"/>
</dbReference>
<dbReference type="InterPro" id="IPR002676">
    <property type="entry name" value="RimM_N"/>
</dbReference>
<dbReference type="InterPro" id="IPR036976">
    <property type="entry name" value="RimM_N_sf"/>
</dbReference>
<dbReference type="InterPro" id="IPR009000">
    <property type="entry name" value="Transl_B-barrel_sf"/>
</dbReference>
<dbReference type="NCBIfam" id="TIGR02273">
    <property type="entry name" value="16S_RimM"/>
    <property type="match status" value="1"/>
</dbReference>
<dbReference type="PANTHER" id="PTHR33692">
    <property type="entry name" value="RIBOSOME MATURATION FACTOR RIMM"/>
    <property type="match status" value="1"/>
</dbReference>
<dbReference type="PANTHER" id="PTHR33692:SF1">
    <property type="entry name" value="RIBOSOME MATURATION FACTOR RIMM"/>
    <property type="match status" value="1"/>
</dbReference>
<dbReference type="Pfam" id="PF24986">
    <property type="entry name" value="PRC_RimM"/>
    <property type="match status" value="1"/>
</dbReference>
<dbReference type="Pfam" id="PF01782">
    <property type="entry name" value="RimM"/>
    <property type="match status" value="1"/>
</dbReference>
<dbReference type="SUPFAM" id="SSF50346">
    <property type="entry name" value="PRC-barrel domain"/>
    <property type="match status" value="1"/>
</dbReference>
<dbReference type="SUPFAM" id="SSF50447">
    <property type="entry name" value="Translation proteins"/>
    <property type="match status" value="1"/>
</dbReference>
<evidence type="ECO:0000255" key="1">
    <source>
        <dbReference type="HAMAP-Rule" id="MF_00014"/>
    </source>
</evidence>
<gene>
    <name evidence="1" type="primary">rimM</name>
    <name type="ordered locus">Sbal223_3102</name>
</gene>
<reference key="1">
    <citation type="submission" date="2008-12" db="EMBL/GenBank/DDBJ databases">
        <title>Complete sequence of chromosome of Shewanella baltica OS223.</title>
        <authorList>
            <consortium name="US DOE Joint Genome Institute"/>
            <person name="Lucas S."/>
            <person name="Copeland A."/>
            <person name="Lapidus A."/>
            <person name="Glavina del Rio T."/>
            <person name="Dalin E."/>
            <person name="Tice H."/>
            <person name="Bruce D."/>
            <person name="Goodwin L."/>
            <person name="Pitluck S."/>
            <person name="Chertkov O."/>
            <person name="Meincke L."/>
            <person name="Brettin T."/>
            <person name="Detter J.C."/>
            <person name="Han C."/>
            <person name="Kuske C.R."/>
            <person name="Larimer F."/>
            <person name="Land M."/>
            <person name="Hauser L."/>
            <person name="Kyrpides N."/>
            <person name="Ovchinnikova G."/>
            <person name="Brettar I."/>
            <person name="Rodrigues J."/>
            <person name="Konstantinidis K."/>
            <person name="Tiedje J."/>
        </authorList>
    </citation>
    <scope>NUCLEOTIDE SEQUENCE [LARGE SCALE GENOMIC DNA]</scope>
    <source>
        <strain>OS223</strain>
    </source>
</reference>